<keyword id="KW-0240">DNA-directed RNA polymerase</keyword>
<keyword id="KW-0548">Nucleotidyltransferase</keyword>
<keyword id="KW-1185">Reference proteome</keyword>
<keyword id="KW-0804">Transcription</keyword>
<keyword id="KW-0808">Transferase</keyword>
<proteinExistence type="predicted"/>
<comment type="function">
    <text>DNA-dependent RNA polymerase catalyzes the transcription of DNA into RNA using the four ribonucleoside triphosphates as substrates.</text>
</comment>
<comment type="catalytic activity">
    <reaction>
        <text>RNA(n) + a ribonucleoside 5'-triphosphate = RNA(n+1) + diphosphate</text>
        <dbReference type="Rhea" id="RHEA:21248"/>
        <dbReference type="Rhea" id="RHEA-COMP:14527"/>
        <dbReference type="Rhea" id="RHEA-COMP:17342"/>
        <dbReference type="ChEBI" id="CHEBI:33019"/>
        <dbReference type="ChEBI" id="CHEBI:61557"/>
        <dbReference type="ChEBI" id="CHEBI:140395"/>
        <dbReference type="EC" id="2.7.7.6"/>
    </reaction>
</comment>
<protein>
    <recommendedName>
        <fullName>DNA-directed RNA polymerase subunit I</fullName>
        <ecNumber>2.7.7.6</ecNumber>
    </recommendedName>
</protein>
<reference key="1">
    <citation type="journal article" date="1996" name="Science">
        <title>Complete genome sequence of the methanogenic archaeon, Methanococcus jannaschii.</title>
        <authorList>
            <person name="Bult C.J."/>
            <person name="White O."/>
            <person name="Olsen G.J."/>
            <person name="Zhou L."/>
            <person name="Fleischmann R.D."/>
            <person name="Sutton G.G."/>
            <person name="Blake J.A."/>
            <person name="FitzGerald L.M."/>
            <person name="Clayton R.A."/>
            <person name="Gocayne J.D."/>
            <person name="Kerlavage A.R."/>
            <person name="Dougherty B.A."/>
            <person name="Tomb J.-F."/>
            <person name="Adams M.D."/>
            <person name="Reich C.I."/>
            <person name="Overbeek R."/>
            <person name="Kirkness E.F."/>
            <person name="Weinstock K.G."/>
            <person name="Merrick J.M."/>
            <person name="Glodek A."/>
            <person name="Scott J.L."/>
            <person name="Geoghagen N.S.M."/>
            <person name="Weidman J.F."/>
            <person name="Fuhrmann J.L."/>
            <person name="Nguyen D."/>
            <person name="Utterback T.R."/>
            <person name="Kelley J.M."/>
            <person name="Peterson J.D."/>
            <person name="Sadow P.W."/>
            <person name="Hanna M.C."/>
            <person name="Cotton M.D."/>
            <person name="Roberts K.M."/>
            <person name="Hurst M.A."/>
            <person name="Kaine B.P."/>
            <person name="Borodovsky M."/>
            <person name="Klenk H.-P."/>
            <person name="Fraser C.M."/>
            <person name="Smith H.O."/>
            <person name="Woese C.R."/>
            <person name="Venter J.C."/>
        </authorList>
    </citation>
    <scope>NUCLEOTIDE SEQUENCE [LARGE SCALE GENOMIC DNA]</scope>
    <source>
        <strain>ATCC 43067 / DSM 2661 / JAL-1 / JCM 10045 / NBRC 100440</strain>
    </source>
</reference>
<sequence length="109" mass="12677">MKGMDEYEKIINDLNTINSKAKFIGIKIIMVRRIIDMHKDNDKLIKKVLEGIKNTDLYDLVLNACPELKGERIKDVYFKKNDYFNVIKKTMSSENTVLKNVLINDESPP</sequence>
<organism>
    <name type="scientific">Methanocaldococcus jannaschii (strain ATCC 43067 / DSM 2661 / JAL-1 / JCM 10045 / NBRC 100440)</name>
    <name type="common">Methanococcus jannaschii</name>
    <dbReference type="NCBI Taxonomy" id="243232"/>
    <lineage>
        <taxon>Archaea</taxon>
        <taxon>Methanobacteriati</taxon>
        <taxon>Methanobacteriota</taxon>
        <taxon>Methanomada group</taxon>
        <taxon>Methanococci</taxon>
        <taxon>Methanococcales</taxon>
        <taxon>Methanocaldococcaceae</taxon>
        <taxon>Methanocaldococcus</taxon>
    </lineage>
</organism>
<dbReference type="EC" id="2.7.7.6"/>
<dbReference type="EMBL" id="L77117">
    <property type="protein sequence ID" value="AAB99398.1"/>
    <property type="molecule type" value="Genomic_DNA"/>
</dbReference>
<dbReference type="PIR" id="E64473">
    <property type="entry name" value="E64473"/>
</dbReference>
<dbReference type="SMR" id="Q58785"/>
<dbReference type="STRING" id="243232.MJ_1390"/>
<dbReference type="PaxDb" id="243232-MJ_1390"/>
<dbReference type="EnsemblBacteria" id="AAB99398">
    <property type="protein sequence ID" value="AAB99398"/>
    <property type="gene ID" value="MJ_1390"/>
</dbReference>
<dbReference type="KEGG" id="mja:MJ_1390"/>
<dbReference type="eggNOG" id="arCOG09634">
    <property type="taxonomic scope" value="Archaea"/>
</dbReference>
<dbReference type="HOGENOM" id="CLU_2271089_0_0_2"/>
<dbReference type="InParanoid" id="Q58785"/>
<dbReference type="OrthoDB" id="378577at2157"/>
<dbReference type="Proteomes" id="UP000000805">
    <property type="component" value="Chromosome"/>
</dbReference>
<dbReference type="GO" id="GO:0000428">
    <property type="term" value="C:DNA-directed RNA polymerase complex"/>
    <property type="evidence" value="ECO:0007669"/>
    <property type="project" value="UniProtKB-KW"/>
</dbReference>
<dbReference type="GO" id="GO:0003899">
    <property type="term" value="F:DNA-directed RNA polymerase activity"/>
    <property type="evidence" value="ECO:0007669"/>
    <property type="project" value="UniProtKB-EC"/>
</dbReference>
<feature type="chain" id="PRO_0000074040" description="DNA-directed RNA polymerase subunit I">
    <location>
        <begin position="1"/>
        <end position="109"/>
    </location>
</feature>
<accession>Q58785</accession>
<name>RPOI_METJA</name>
<gene>
    <name type="primary">rpoI</name>
    <name type="ordered locus">MJ1390</name>
</gene>